<organism>
    <name type="scientific">Bacillus cereus (strain AH820)</name>
    <dbReference type="NCBI Taxonomy" id="405535"/>
    <lineage>
        <taxon>Bacteria</taxon>
        <taxon>Bacillati</taxon>
        <taxon>Bacillota</taxon>
        <taxon>Bacilli</taxon>
        <taxon>Bacillales</taxon>
        <taxon>Bacillaceae</taxon>
        <taxon>Bacillus</taxon>
        <taxon>Bacillus cereus group</taxon>
    </lineage>
</organism>
<comment type="catalytic activity">
    <reaction evidence="1">
        <text>L-citrulline + L-aspartate + ATP = 2-(N(omega)-L-arginino)succinate + AMP + diphosphate + H(+)</text>
        <dbReference type="Rhea" id="RHEA:10932"/>
        <dbReference type="ChEBI" id="CHEBI:15378"/>
        <dbReference type="ChEBI" id="CHEBI:29991"/>
        <dbReference type="ChEBI" id="CHEBI:30616"/>
        <dbReference type="ChEBI" id="CHEBI:33019"/>
        <dbReference type="ChEBI" id="CHEBI:57472"/>
        <dbReference type="ChEBI" id="CHEBI:57743"/>
        <dbReference type="ChEBI" id="CHEBI:456215"/>
        <dbReference type="EC" id="6.3.4.5"/>
    </reaction>
</comment>
<comment type="pathway">
    <text evidence="1">Amino-acid biosynthesis; L-arginine biosynthesis; L-arginine from L-ornithine and carbamoyl phosphate: step 2/3.</text>
</comment>
<comment type="subunit">
    <text evidence="1">Homotetramer.</text>
</comment>
<comment type="subcellular location">
    <subcellularLocation>
        <location evidence="1">Cytoplasm</location>
    </subcellularLocation>
</comment>
<comment type="similarity">
    <text evidence="1">Belongs to the argininosuccinate synthase family. Type 1 subfamily.</text>
</comment>
<dbReference type="EC" id="6.3.4.5" evidence="1"/>
<dbReference type="EMBL" id="CP001283">
    <property type="protein sequence ID" value="ACK91474.1"/>
    <property type="molecule type" value="Genomic_DNA"/>
</dbReference>
<dbReference type="RefSeq" id="WP_000412327.1">
    <property type="nucleotide sequence ID" value="NC_011773.1"/>
</dbReference>
<dbReference type="SMR" id="B7JS06"/>
<dbReference type="KEGG" id="bcu:BCAH820_4748"/>
<dbReference type="HOGENOM" id="CLU_032784_4_2_9"/>
<dbReference type="UniPathway" id="UPA00068">
    <property type="reaction ID" value="UER00113"/>
</dbReference>
<dbReference type="Proteomes" id="UP000001363">
    <property type="component" value="Chromosome"/>
</dbReference>
<dbReference type="GO" id="GO:0005737">
    <property type="term" value="C:cytoplasm"/>
    <property type="evidence" value="ECO:0007669"/>
    <property type="project" value="UniProtKB-SubCell"/>
</dbReference>
<dbReference type="GO" id="GO:0004055">
    <property type="term" value="F:argininosuccinate synthase activity"/>
    <property type="evidence" value="ECO:0007669"/>
    <property type="project" value="UniProtKB-UniRule"/>
</dbReference>
<dbReference type="GO" id="GO:0005524">
    <property type="term" value="F:ATP binding"/>
    <property type="evidence" value="ECO:0007669"/>
    <property type="project" value="UniProtKB-UniRule"/>
</dbReference>
<dbReference type="GO" id="GO:0000053">
    <property type="term" value="P:argininosuccinate metabolic process"/>
    <property type="evidence" value="ECO:0007669"/>
    <property type="project" value="TreeGrafter"/>
</dbReference>
<dbReference type="GO" id="GO:0006526">
    <property type="term" value="P:L-arginine biosynthetic process"/>
    <property type="evidence" value="ECO:0007669"/>
    <property type="project" value="UniProtKB-UniRule"/>
</dbReference>
<dbReference type="GO" id="GO:0000050">
    <property type="term" value="P:urea cycle"/>
    <property type="evidence" value="ECO:0007669"/>
    <property type="project" value="TreeGrafter"/>
</dbReference>
<dbReference type="CDD" id="cd01999">
    <property type="entry name" value="ASS"/>
    <property type="match status" value="1"/>
</dbReference>
<dbReference type="FunFam" id="1.20.5.470:FF:000002">
    <property type="entry name" value="Argininosuccinate synthase"/>
    <property type="match status" value="1"/>
</dbReference>
<dbReference type="FunFam" id="3.40.50.620:FF:000038">
    <property type="entry name" value="Argininosuccinate synthase"/>
    <property type="match status" value="1"/>
</dbReference>
<dbReference type="FunFam" id="3.90.1260.10:FF:000007">
    <property type="entry name" value="Argininosuccinate synthase"/>
    <property type="match status" value="1"/>
</dbReference>
<dbReference type="Gene3D" id="3.90.1260.10">
    <property type="entry name" value="Argininosuccinate synthetase, chain A, domain 2"/>
    <property type="match status" value="1"/>
</dbReference>
<dbReference type="Gene3D" id="3.40.50.620">
    <property type="entry name" value="HUPs"/>
    <property type="match status" value="1"/>
</dbReference>
<dbReference type="Gene3D" id="1.20.5.470">
    <property type="entry name" value="Single helix bin"/>
    <property type="match status" value="1"/>
</dbReference>
<dbReference type="HAMAP" id="MF_00005">
    <property type="entry name" value="Arg_succ_synth_type1"/>
    <property type="match status" value="1"/>
</dbReference>
<dbReference type="InterPro" id="IPR048268">
    <property type="entry name" value="Arginosuc_syn_C"/>
</dbReference>
<dbReference type="InterPro" id="IPR048267">
    <property type="entry name" value="Arginosuc_syn_N"/>
</dbReference>
<dbReference type="InterPro" id="IPR001518">
    <property type="entry name" value="Arginosuc_synth"/>
</dbReference>
<dbReference type="InterPro" id="IPR018223">
    <property type="entry name" value="Arginosuc_synth_CS"/>
</dbReference>
<dbReference type="InterPro" id="IPR023434">
    <property type="entry name" value="Arginosuc_synth_type_1_subfam"/>
</dbReference>
<dbReference type="InterPro" id="IPR024074">
    <property type="entry name" value="AS_cat/multimer_dom_body"/>
</dbReference>
<dbReference type="InterPro" id="IPR014729">
    <property type="entry name" value="Rossmann-like_a/b/a_fold"/>
</dbReference>
<dbReference type="NCBIfam" id="TIGR00032">
    <property type="entry name" value="argG"/>
    <property type="match status" value="1"/>
</dbReference>
<dbReference type="NCBIfam" id="NF001770">
    <property type="entry name" value="PRK00509.1"/>
    <property type="match status" value="1"/>
</dbReference>
<dbReference type="PANTHER" id="PTHR11587">
    <property type="entry name" value="ARGININOSUCCINATE SYNTHASE"/>
    <property type="match status" value="1"/>
</dbReference>
<dbReference type="PANTHER" id="PTHR11587:SF2">
    <property type="entry name" value="ARGININOSUCCINATE SYNTHASE"/>
    <property type="match status" value="1"/>
</dbReference>
<dbReference type="Pfam" id="PF20979">
    <property type="entry name" value="Arginosuc_syn_C"/>
    <property type="match status" value="1"/>
</dbReference>
<dbReference type="Pfam" id="PF00764">
    <property type="entry name" value="Arginosuc_synth"/>
    <property type="match status" value="1"/>
</dbReference>
<dbReference type="SUPFAM" id="SSF52402">
    <property type="entry name" value="Adenine nucleotide alpha hydrolases-like"/>
    <property type="match status" value="1"/>
</dbReference>
<dbReference type="SUPFAM" id="SSF69864">
    <property type="entry name" value="Argininosuccinate synthetase, C-terminal domain"/>
    <property type="match status" value="1"/>
</dbReference>
<dbReference type="PROSITE" id="PS00564">
    <property type="entry name" value="ARGININOSUCCIN_SYN_1"/>
    <property type="match status" value="1"/>
</dbReference>
<dbReference type="PROSITE" id="PS00565">
    <property type="entry name" value="ARGININOSUCCIN_SYN_2"/>
    <property type="match status" value="1"/>
</dbReference>
<sequence>MEKKKVVLAYSGGLDTSVAIKWLQEKNYDIIALCLDLGEGKDLAFVKEKALSVGAIKSYMIDVQEEFANEYALMAMQAHTLYEGKYPLVSALSRPLIAKKLVEIAEQEGATAVAHGCTGKGNDQVRFEVSIQALNPYLEVIAPVREWKWSREEEIAYAKENNVPIPINLDSPFSIDQNLWGRSNECGILEDPWAAPPEDAYEMTLALEDTPNKPEFVEIGFEAGVPTTLNGTAYPLSELIKTLNALAGKHGVGRIDHVENRLVGIKSREVYECPAAMTLITAHKELEDLTLVKEVAHFKPMIEQKITELIYNGLWFSPLKQALHAFLQETQKNVTGMVRVKLFKGHAIVEGRKSEYSLYDEKLATYTAQDEFNHDAAVGFISLFGLPTKVYSQVNQKKVEA</sequence>
<evidence type="ECO:0000255" key="1">
    <source>
        <dbReference type="HAMAP-Rule" id="MF_00005"/>
    </source>
</evidence>
<reference key="1">
    <citation type="submission" date="2008-10" db="EMBL/GenBank/DDBJ databases">
        <title>Genome sequence of Bacillus cereus AH820.</title>
        <authorList>
            <person name="Dodson R.J."/>
            <person name="Durkin A.S."/>
            <person name="Rosovitz M.J."/>
            <person name="Rasko D.A."/>
            <person name="Hoffmaster A."/>
            <person name="Ravel J."/>
            <person name="Sutton G."/>
        </authorList>
    </citation>
    <scope>NUCLEOTIDE SEQUENCE [LARGE SCALE GENOMIC DNA]</scope>
    <source>
        <strain>AH820</strain>
    </source>
</reference>
<feature type="chain" id="PRO_1000116185" description="Argininosuccinate synthase">
    <location>
        <begin position="1"/>
        <end position="401"/>
    </location>
</feature>
<feature type="binding site" evidence="1">
    <location>
        <begin position="9"/>
        <end position="17"/>
    </location>
    <ligand>
        <name>ATP</name>
        <dbReference type="ChEBI" id="CHEBI:30616"/>
    </ligand>
</feature>
<feature type="binding site" evidence="1">
    <location>
        <position position="86"/>
    </location>
    <ligand>
        <name>L-citrulline</name>
        <dbReference type="ChEBI" id="CHEBI:57743"/>
    </ligand>
</feature>
<feature type="binding site" evidence="1">
    <location>
        <position position="116"/>
    </location>
    <ligand>
        <name>ATP</name>
        <dbReference type="ChEBI" id="CHEBI:30616"/>
    </ligand>
</feature>
<feature type="binding site" evidence="1">
    <location>
        <position position="118"/>
    </location>
    <ligand>
        <name>L-aspartate</name>
        <dbReference type="ChEBI" id="CHEBI:29991"/>
    </ligand>
</feature>
<feature type="binding site" evidence="1">
    <location>
        <position position="122"/>
    </location>
    <ligand>
        <name>L-aspartate</name>
        <dbReference type="ChEBI" id="CHEBI:29991"/>
    </ligand>
</feature>
<feature type="binding site" evidence="1">
    <location>
        <position position="122"/>
    </location>
    <ligand>
        <name>L-citrulline</name>
        <dbReference type="ChEBI" id="CHEBI:57743"/>
    </ligand>
</feature>
<feature type="binding site" evidence="1">
    <location>
        <position position="123"/>
    </location>
    <ligand>
        <name>L-aspartate</name>
        <dbReference type="ChEBI" id="CHEBI:29991"/>
    </ligand>
</feature>
<feature type="binding site" evidence="1">
    <location>
        <position position="126"/>
    </location>
    <ligand>
        <name>L-citrulline</name>
        <dbReference type="ChEBI" id="CHEBI:57743"/>
    </ligand>
</feature>
<feature type="binding site" evidence="1">
    <location>
        <position position="174"/>
    </location>
    <ligand>
        <name>L-citrulline</name>
        <dbReference type="ChEBI" id="CHEBI:57743"/>
    </ligand>
</feature>
<feature type="binding site" evidence="1">
    <location>
        <position position="183"/>
    </location>
    <ligand>
        <name>L-citrulline</name>
        <dbReference type="ChEBI" id="CHEBI:57743"/>
    </ligand>
</feature>
<feature type="binding site" evidence="1">
    <location>
        <position position="259"/>
    </location>
    <ligand>
        <name>L-citrulline</name>
        <dbReference type="ChEBI" id="CHEBI:57743"/>
    </ligand>
</feature>
<feature type="binding site" evidence="1">
    <location>
        <position position="271"/>
    </location>
    <ligand>
        <name>L-citrulline</name>
        <dbReference type="ChEBI" id="CHEBI:57743"/>
    </ligand>
</feature>
<name>ASSY_BACC0</name>
<gene>
    <name evidence="1" type="primary">argG</name>
    <name type="ordered locus">BCAH820_4748</name>
</gene>
<proteinExistence type="inferred from homology"/>
<keyword id="KW-0028">Amino-acid biosynthesis</keyword>
<keyword id="KW-0055">Arginine biosynthesis</keyword>
<keyword id="KW-0067">ATP-binding</keyword>
<keyword id="KW-0963">Cytoplasm</keyword>
<keyword id="KW-0436">Ligase</keyword>
<keyword id="KW-0547">Nucleotide-binding</keyword>
<accession>B7JS06</accession>
<protein>
    <recommendedName>
        <fullName evidence="1">Argininosuccinate synthase</fullName>
        <ecNumber evidence="1">6.3.4.5</ecNumber>
    </recommendedName>
    <alternativeName>
        <fullName evidence="1">Citrulline--aspartate ligase</fullName>
    </alternativeName>
</protein>